<gene>
    <name evidence="1" type="primary">aat</name>
    <name type="ordered locus">VCM66_1675</name>
</gene>
<protein>
    <recommendedName>
        <fullName evidence="1">Leucyl/phenylalanyl-tRNA--protein transferase</fullName>
        <ecNumber evidence="1">2.3.2.6</ecNumber>
    </recommendedName>
    <alternativeName>
        <fullName evidence="1">L/F-transferase</fullName>
    </alternativeName>
    <alternativeName>
        <fullName evidence="1">Leucyltransferase</fullName>
    </alternativeName>
    <alternativeName>
        <fullName evidence="1">Phenyalanyltransferase</fullName>
    </alternativeName>
</protein>
<comment type="function">
    <text evidence="1">Functions in the N-end rule pathway of protein degradation where it conjugates Leu, Phe and, less efficiently, Met from aminoacyl-tRNAs to the N-termini of proteins containing an N-terminal arginine or lysine.</text>
</comment>
<comment type="catalytic activity">
    <reaction evidence="1">
        <text>N-terminal L-lysyl-[protein] + L-leucyl-tRNA(Leu) = N-terminal L-leucyl-L-lysyl-[protein] + tRNA(Leu) + H(+)</text>
        <dbReference type="Rhea" id="RHEA:12340"/>
        <dbReference type="Rhea" id="RHEA-COMP:9613"/>
        <dbReference type="Rhea" id="RHEA-COMP:9622"/>
        <dbReference type="Rhea" id="RHEA-COMP:12670"/>
        <dbReference type="Rhea" id="RHEA-COMP:12671"/>
        <dbReference type="ChEBI" id="CHEBI:15378"/>
        <dbReference type="ChEBI" id="CHEBI:65249"/>
        <dbReference type="ChEBI" id="CHEBI:78442"/>
        <dbReference type="ChEBI" id="CHEBI:78494"/>
        <dbReference type="ChEBI" id="CHEBI:133043"/>
        <dbReference type="EC" id="2.3.2.6"/>
    </reaction>
</comment>
<comment type="catalytic activity">
    <reaction evidence="1">
        <text>N-terminal L-arginyl-[protein] + L-leucyl-tRNA(Leu) = N-terminal L-leucyl-L-arginyl-[protein] + tRNA(Leu) + H(+)</text>
        <dbReference type="Rhea" id="RHEA:50416"/>
        <dbReference type="Rhea" id="RHEA-COMP:9613"/>
        <dbReference type="Rhea" id="RHEA-COMP:9622"/>
        <dbReference type="Rhea" id="RHEA-COMP:12672"/>
        <dbReference type="Rhea" id="RHEA-COMP:12673"/>
        <dbReference type="ChEBI" id="CHEBI:15378"/>
        <dbReference type="ChEBI" id="CHEBI:64719"/>
        <dbReference type="ChEBI" id="CHEBI:78442"/>
        <dbReference type="ChEBI" id="CHEBI:78494"/>
        <dbReference type="ChEBI" id="CHEBI:133044"/>
        <dbReference type="EC" id="2.3.2.6"/>
    </reaction>
</comment>
<comment type="catalytic activity">
    <reaction evidence="1">
        <text>L-phenylalanyl-tRNA(Phe) + an N-terminal L-alpha-aminoacyl-[protein] = an N-terminal L-phenylalanyl-L-alpha-aminoacyl-[protein] + tRNA(Phe)</text>
        <dbReference type="Rhea" id="RHEA:43632"/>
        <dbReference type="Rhea" id="RHEA-COMP:9668"/>
        <dbReference type="Rhea" id="RHEA-COMP:9699"/>
        <dbReference type="Rhea" id="RHEA-COMP:10636"/>
        <dbReference type="Rhea" id="RHEA-COMP:10637"/>
        <dbReference type="ChEBI" id="CHEBI:78442"/>
        <dbReference type="ChEBI" id="CHEBI:78531"/>
        <dbReference type="ChEBI" id="CHEBI:78597"/>
        <dbReference type="ChEBI" id="CHEBI:83561"/>
        <dbReference type="EC" id="2.3.2.6"/>
    </reaction>
</comment>
<comment type="subcellular location">
    <subcellularLocation>
        <location evidence="1">Cytoplasm</location>
    </subcellularLocation>
</comment>
<comment type="similarity">
    <text evidence="1">Belongs to the L/F-transferase family.</text>
</comment>
<evidence type="ECO:0000255" key="1">
    <source>
        <dbReference type="HAMAP-Rule" id="MF_00688"/>
    </source>
</evidence>
<feature type="chain" id="PRO_1000147797" description="Leucyl/phenylalanyl-tRNA--protein transferase">
    <location>
        <begin position="1"/>
        <end position="243"/>
    </location>
</feature>
<dbReference type="EC" id="2.3.2.6" evidence="1"/>
<dbReference type="EMBL" id="CP001233">
    <property type="protein sequence ID" value="ACP05983.1"/>
    <property type="molecule type" value="Genomic_DNA"/>
</dbReference>
<dbReference type="RefSeq" id="WP_001029434.1">
    <property type="nucleotide sequence ID" value="NC_012578.1"/>
</dbReference>
<dbReference type="SMR" id="C3LN57"/>
<dbReference type="KEGG" id="vcm:VCM66_1675"/>
<dbReference type="HOGENOM" id="CLU_075045_0_0_6"/>
<dbReference type="Proteomes" id="UP000001217">
    <property type="component" value="Chromosome I"/>
</dbReference>
<dbReference type="GO" id="GO:0005737">
    <property type="term" value="C:cytoplasm"/>
    <property type="evidence" value="ECO:0007669"/>
    <property type="project" value="UniProtKB-SubCell"/>
</dbReference>
<dbReference type="GO" id="GO:0008914">
    <property type="term" value="F:leucyl-tRNA--protein transferase activity"/>
    <property type="evidence" value="ECO:0007669"/>
    <property type="project" value="UniProtKB-UniRule"/>
</dbReference>
<dbReference type="GO" id="GO:0030163">
    <property type="term" value="P:protein catabolic process"/>
    <property type="evidence" value="ECO:0007669"/>
    <property type="project" value="UniProtKB-UniRule"/>
</dbReference>
<dbReference type="FunFam" id="3.30.70.3550:FF:000001">
    <property type="entry name" value="Leucyl/phenylalanyl-tRNA--protein transferase"/>
    <property type="match status" value="1"/>
</dbReference>
<dbReference type="FunFam" id="3.40.630.70:FF:000005">
    <property type="entry name" value="Leucyl/phenylalanyl-tRNA--protein transferase"/>
    <property type="match status" value="1"/>
</dbReference>
<dbReference type="Gene3D" id="3.40.630.70">
    <property type="entry name" value="Leucyl/phenylalanyl-tRNA-protein transferase, C-terminal domain"/>
    <property type="match status" value="1"/>
</dbReference>
<dbReference type="Gene3D" id="3.30.70.3550">
    <property type="entry name" value="Leucyl/phenylalanyl-tRNA-protein transferase, N-terminal domain"/>
    <property type="match status" value="1"/>
</dbReference>
<dbReference type="HAMAP" id="MF_00688">
    <property type="entry name" value="Leu_Phe_trans"/>
    <property type="match status" value="1"/>
</dbReference>
<dbReference type="InterPro" id="IPR016181">
    <property type="entry name" value="Acyl_CoA_acyltransferase"/>
</dbReference>
<dbReference type="InterPro" id="IPR004616">
    <property type="entry name" value="Leu/Phe-tRNA_Trfase"/>
</dbReference>
<dbReference type="InterPro" id="IPR042203">
    <property type="entry name" value="Leu/Phe-tRNA_Trfase_C"/>
</dbReference>
<dbReference type="InterPro" id="IPR042221">
    <property type="entry name" value="Leu/Phe-tRNA_Trfase_N"/>
</dbReference>
<dbReference type="NCBIfam" id="TIGR00667">
    <property type="entry name" value="aat"/>
    <property type="match status" value="1"/>
</dbReference>
<dbReference type="PANTHER" id="PTHR30098">
    <property type="entry name" value="LEUCYL/PHENYLALANYL-TRNA--PROTEIN TRANSFERASE"/>
    <property type="match status" value="1"/>
</dbReference>
<dbReference type="PANTHER" id="PTHR30098:SF2">
    <property type="entry name" value="LEUCYL_PHENYLALANYL-TRNA--PROTEIN TRANSFERASE"/>
    <property type="match status" value="1"/>
</dbReference>
<dbReference type="Pfam" id="PF03588">
    <property type="entry name" value="Leu_Phe_trans"/>
    <property type="match status" value="1"/>
</dbReference>
<dbReference type="SUPFAM" id="SSF55729">
    <property type="entry name" value="Acyl-CoA N-acyltransferases (Nat)"/>
    <property type="match status" value="1"/>
</dbReference>
<organism>
    <name type="scientific">Vibrio cholerae serotype O1 (strain M66-2)</name>
    <dbReference type="NCBI Taxonomy" id="579112"/>
    <lineage>
        <taxon>Bacteria</taxon>
        <taxon>Pseudomonadati</taxon>
        <taxon>Pseudomonadota</taxon>
        <taxon>Gammaproteobacteria</taxon>
        <taxon>Vibrionales</taxon>
        <taxon>Vibrionaceae</taxon>
        <taxon>Vibrio</taxon>
    </lineage>
</organism>
<sequence>MAIYLTELSPETLTFPSPFTALDDPNGLLAFGGDLRLERIWAAYQQGIFPWYGPEDPILWWSPSPRAVFDPTRFQPAKSVKKFQRKHQYRVSVNHATSQVIEQCALTRPADQRWLNDSMRHAYGELAKQGRCHSVEVWQGEQLVGGLYGISVGQLFCGESMFSLATNASKIALWYFCDHFSRHQGQLIDCQVMNPHLQSLGATTLSREQFIQSLLSFKEKQVLSGCFETQWLATPTSPCAFED</sequence>
<proteinExistence type="inferred from homology"/>
<keyword id="KW-0012">Acyltransferase</keyword>
<keyword id="KW-0963">Cytoplasm</keyword>
<keyword id="KW-0808">Transferase</keyword>
<name>LFTR_VIBCM</name>
<reference key="1">
    <citation type="journal article" date="2008" name="PLoS ONE">
        <title>A recalibrated molecular clock and independent origins for the cholera pandemic clones.</title>
        <authorList>
            <person name="Feng L."/>
            <person name="Reeves P.R."/>
            <person name="Lan R."/>
            <person name="Ren Y."/>
            <person name="Gao C."/>
            <person name="Zhou Z."/>
            <person name="Ren Y."/>
            <person name="Cheng J."/>
            <person name="Wang W."/>
            <person name="Wang J."/>
            <person name="Qian W."/>
            <person name="Li D."/>
            <person name="Wang L."/>
        </authorList>
    </citation>
    <scope>NUCLEOTIDE SEQUENCE [LARGE SCALE GENOMIC DNA]</scope>
    <source>
        <strain>M66-2</strain>
    </source>
</reference>
<accession>C3LN57</accession>